<sequence>MKTTIKQAKDHLNQDVTIGAWLTNKRSSGKIAFLQLRDGTGFMQGVVVKSEVDEEVFKLAKEITQESSLYVTGTITEDNRSDLGYEMQVKSIEVISEAHDYPITPKNHGTEFLMDHRHLWLRSKKQHAVMKIRNEVIRATYEFFNKDGFTKVDPPILTASAPEGTSELFLTKYFDQDAFLSQSGQLYLEAAAMAHGKVFSFGPTFRAEKSKTRRHLIEFWMIEGEMAFTNHAESLEIQEQYVTHVVKSVLENCKLELKILERDTSKLEKVATPFPRISYDDAIEFLKAEGFDDIEWGEDFGAPHETAIANHYDLPVFITNYPTKIKPFYMQPNPENEETVLCADLIAPEGYGEIIGGSERVDDLELLEQRVKEHGLDEEAYSYYLDLRRYGSVPHCGFGLGLERTVAWISGVEHVRETAPFPRLLNRLYP</sequence>
<feature type="chain" id="PRO_1000051439" description="Asparagine--tRNA ligase">
    <location>
        <begin position="1"/>
        <end position="430"/>
    </location>
</feature>
<dbReference type="EC" id="6.1.1.22" evidence="1"/>
<dbReference type="EMBL" id="AJ938182">
    <property type="protein sequence ID" value="CAI81007.1"/>
    <property type="molecule type" value="Genomic_DNA"/>
</dbReference>
<dbReference type="RefSeq" id="WP_000858798.1">
    <property type="nucleotide sequence ID" value="NC_007622.1"/>
</dbReference>
<dbReference type="SMR" id="Q2YY52"/>
<dbReference type="KEGG" id="sab:SAB1318c"/>
<dbReference type="HOGENOM" id="CLU_004553_2_0_9"/>
<dbReference type="GO" id="GO:0005737">
    <property type="term" value="C:cytoplasm"/>
    <property type="evidence" value="ECO:0007669"/>
    <property type="project" value="UniProtKB-SubCell"/>
</dbReference>
<dbReference type="GO" id="GO:0004816">
    <property type="term" value="F:asparagine-tRNA ligase activity"/>
    <property type="evidence" value="ECO:0007669"/>
    <property type="project" value="UniProtKB-UniRule"/>
</dbReference>
<dbReference type="GO" id="GO:0005524">
    <property type="term" value="F:ATP binding"/>
    <property type="evidence" value="ECO:0007669"/>
    <property type="project" value="UniProtKB-UniRule"/>
</dbReference>
<dbReference type="GO" id="GO:0140096">
    <property type="term" value="F:catalytic activity, acting on a protein"/>
    <property type="evidence" value="ECO:0007669"/>
    <property type="project" value="UniProtKB-ARBA"/>
</dbReference>
<dbReference type="GO" id="GO:0003676">
    <property type="term" value="F:nucleic acid binding"/>
    <property type="evidence" value="ECO:0007669"/>
    <property type="project" value="InterPro"/>
</dbReference>
<dbReference type="GO" id="GO:0016740">
    <property type="term" value="F:transferase activity"/>
    <property type="evidence" value="ECO:0007669"/>
    <property type="project" value="UniProtKB-ARBA"/>
</dbReference>
<dbReference type="GO" id="GO:0006421">
    <property type="term" value="P:asparaginyl-tRNA aminoacylation"/>
    <property type="evidence" value="ECO:0007669"/>
    <property type="project" value="UniProtKB-UniRule"/>
</dbReference>
<dbReference type="CDD" id="cd04323">
    <property type="entry name" value="AsnRS_cyto_like_N"/>
    <property type="match status" value="1"/>
</dbReference>
<dbReference type="CDD" id="cd00776">
    <property type="entry name" value="AsxRS_core"/>
    <property type="match status" value="1"/>
</dbReference>
<dbReference type="Gene3D" id="3.30.930.10">
    <property type="entry name" value="Bira Bifunctional Protein, Domain 2"/>
    <property type="match status" value="1"/>
</dbReference>
<dbReference type="Gene3D" id="2.40.50.140">
    <property type="entry name" value="Nucleic acid-binding proteins"/>
    <property type="match status" value="1"/>
</dbReference>
<dbReference type="HAMAP" id="MF_00534">
    <property type="entry name" value="Asn_tRNA_synth"/>
    <property type="match status" value="1"/>
</dbReference>
<dbReference type="InterPro" id="IPR004364">
    <property type="entry name" value="Aa-tRNA-synt_II"/>
</dbReference>
<dbReference type="InterPro" id="IPR006195">
    <property type="entry name" value="aa-tRNA-synth_II"/>
</dbReference>
<dbReference type="InterPro" id="IPR045864">
    <property type="entry name" value="aa-tRNA-synth_II/BPL/LPL"/>
</dbReference>
<dbReference type="InterPro" id="IPR004522">
    <property type="entry name" value="Asn-tRNA-ligase"/>
</dbReference>
<dbReference type="InterPro" id="IPR002312">
    <property type="entry name" value="Asp/Asn-tRNA-synth_IIb"/>
</dbReference>
<dbReference type="InterPro" id="IPR012340">
    <property type="entry name" value="NA-bd_OB-fold"/>
</dbReference>
<dbReference type="InterPro" id="IPR004365">
    <property type="entry name" value="NA-bd_OB_tRNA"/>
</dbReference>
<dbReference type="NCBIfam" id="TIGR00457">
    <property type="entry name" value="asnS"/>
    <property type="match status" value="1"/>
</dbReference>
<dbReference type="NCBIfam" id="NF003037">
    <property type="entry name" value="PRK03932.1"/>
    <property type="match status" value="1"/>
</dbReference>
<dbReference type="NCBIfam" id="NF003483">
    <property type="entry name" value="PRK05159.1"/>
    <property type="match status" value="1"/>
</dbReference>
<dbReference type="PANTHER" id="PTHR22594:SF34">
    <property type="entry name" value="ASPARAGINE--TRNA LIGASE, MITOCHONDRIAL-RELATED"/>
    <property type="match status" value="1"/>
</dbReference>
<dbReference type="PANTHER" id="PTHR22594">
    <property type="entry name" value="ASPARTYL/LYSYL-TRNA SYNTHETASE"/>
    <property type="match status" value="1"/>
</dbReference>
<dbReference type="Pfam" id="PF00152">
    <property type="entry name" value="tRNA-synt_2"/>
    <property type="match status" value="1"/>
</dbReference>
<dbReference type="Pfam" id="PF01336">
    <property type="entry name" value="tRNA_anti-codon"/>
    <property type="match status" value="1"/>
</dbReference>
<dbReference type="PRINTS" id="PR01042">
    <property type="entry name" value="TRNASYNTHASP"/>
</dbReference>
<dbReference type="SUPFAM" id="SSF55681">
    <property type="entry name" value="Class II aaRS and biotin synthetases"/>
    <property type="match status" value="1"/>
</dbReference>
<dbReference type="SUPFAM" id="SSF50249">
    <property type="entry name" value="Nucleic acid-binding proteins"/>
    <property type="match status" value="1"/>
</dbReference>
<dbReference type="PROSITE" id="PS50862">
    <property type="entry name" value="AA_TRNA_LIGASE_II"/>
    <property type="match status" value="1"/>
</dbReference>
<comment type="catalytic activity">
    <reaction evidence="1">
        <text>tRNA(Asn) + L-asparagine + ATP = L-asparaginyl-tRNA(Asn) + AMP + diphosphate + H(+)</text>
        <dbReference type="Rhea" id="RHEA:11180"/>
        <dbReference type="Rhea" id="RHEA-COMP:9659"/>
        <dbReference type="Rhea" id="RHEA-COMP:9674"/>
        <dbReference type="ChEBI" id="CHEBI:15378"/>
        <dbReference type="ChEBI" id="CHEBI:30616"/>
        <dbReference type="ChEBI" id="CHEBI:33019"/>
        <dbReference type="ChEBI" id="CHEBI:58048"/>
        <dbReference type="ChEBI" id="CHEBI:78442"/>
        <dbReference type="ChEBI" id="CHEBI:78515"/>
        <dbReference type="ChEBI" id="CHEBI:456215"/>
        <dbReference type="EC" id="6.1.1.22"/>
    </reaction>
</comment>
<comment type="subunit">
    <text evidence="1">Homodimer.</text>
</comment>
<comment type="subcellular location">
    <subcellularLocation>
        <location evidence="1">Cytoplasm</location>
    </subcellularLocation>
</comment>
<comment type="similarity">
    <text evidence="1">Belongs to the class-II aminoacyl-tRNA synthetase family.</text>
</comment>
<reference key="1">
    <citation type="journal article" date="2007" name="PLoS ONE">
        <title>Molecular correlates of host specialization in Staphylococcus aureus.</title>
        <authorList>
            <person name="Herron-Olson L."/>
            <person name="Fitzgerald J.R."/>
            <person name="Musser J.M."/>
            <person name="Kapur V."/>
        </authorList>
    </citation>
    <scope>NUCLEOTIDE SEQUENCE [LARGE SCALE GENOMIC DNA]</scope>
    <source>
        <strain>bovine RF122 / ET3-1</strain>
    </source>
</reference>
<evidence type="ECO:0000255" key="1">
    <source>
        <dbReference type="HAMAP-Rule" id="MF_00534"/>
    </source>
</evidence>
<accession>Q2YY52</accession>
<gene>
    <name evidence="1" type="primary">asnS</name>
    <name type="ordered locus">SAB1318c</name>
</gene>
<organism>
    <name type="scientific">Staphylococcus aureus (strain bovine RF122 / ET3-1)</name>
    <dbReference type="NCBI Taxonomy" id="273036"/>
    <lineage>
        <taxon>Bacteria</taxon>
        <taxon>Bacillati</taxon>
        <taxon>Bacillota</taxon>
        <taxon>Bacilli</taxon>
        <taxon>Bacillales</taxon>
        <taxon>Staphylococcaceae</taxon>
        <taxon>Staphylococcus</taxon>
    </lineage>
</organism>
<keyword id="KW-0030">Aminoacyl-tRNA synthetase</keyword>
<keyword id="KW-0067">ATP-binding</keyword>
<keyword id="KW-0963">Cytoplasm</keyword>
<keyword id="KW-0436">Ligase</keyword>
<keyword id="KW-0547">Nucleotide-binding</keyword>
<keyword id="KW-0648">Protein biosynthesis</keyword>
<protein>
    <recommendedName>
        <fullName evidence="1">Asparagine--tRNA ligase</fullName>
        <ecNumber evidence="1">6.1.1.22</ecNumber>
    </recommendedName>
    <alternativeName>
        <fullName evidence="1">Asparaginyl-tRNA synthetase</fullName>
        <shortName evidence="1">AsnRS</shortName>
    </alternativeName>
</protein>
<name>SYN_STAAB</name>
<proteinExistence type="inferred from homology"/>